<gene>
    <name evidence="1" type="primary">aspS</name>
    <name type="ordered locus">Mjls_2347</name>
</gene>
<accession>A3PZ05</accession>
<protein>
    <recommendedName>
        <fullName evidence="1">Aspartate--tRNA(Asp/Asn) ligase</fullName>
        <ecNumber evidence="1">6.1.1.23</ecNumber>
    </recommendedName>
    <alternativeName>
        <fullName evidence="1">Aspartyl-tRNA synthetase</fullName>
        <shortName evidence="1">AspRS</shortName>
    </alternativeName>
    <alternativeName>
        <fullName evidence="1">Non-discriminating aspartyl-tRNA synthetase</fullName>
        <shortName evidence="1">ND-AspRS</shortName>
    </alternativeName>
</protein>
<feature type="chain" id="PRO_1000006712" description="Aspartate--tRNA(Asp/Asn) ligase">
    <location>
        <begin position="1"/>
        <end position="590"/>
    </location>
</feature>
<feature type="region of interest" description="Aspartate" evidence="1">
    <location>
        <begin position="194"/>
        <end position="197"/>
    </location>
</feature>
<feature type="region of interest" description="Disordered" evidence="2">
    <location>
        <begin position="557"/>
        <end position="590"/>
    </location>
</feature>
<feature type="compositionally biased region" description="Basic and acidic residues" evidence="2">
    <location>
        <begin position="575"/>
        <end position="590"/>
    </location>
</feature>
<feature type="binding site" evidence="1">
    <location>
        <position position="170"/>
    </location>
    <ligand>
        <name>L-aspartate</name>
        <dbReference type="ChEBI" id="CHEBI:29991"/>
    </ligand>
</feature>
<feature type="binding site" evidence="1">
    <location>
        <begin position="216"/>
        <end position="218"/>
    </location>
    <ligand>
        <name>ATP</name>
        <dbReference type="ChEBI" id="CHEBI:30616"/>
    </ligand>
</feature>
<feature type="binding site" evidence="1">
    <location>
        <position position="216"/>
    </location>
    <ligand>
        <name>L-aspartate</name>
        <dbReference type="ChEBI" id="CHEBI:29991"/>
    </ligand>
</feature>
<feature type="binding site" evidence="1">
    <location>
        <position position="225"/>
    </location>
    <ligand>
        <name>ATP</name>
        <dbReference type="ChEBI" id="CHEBI:30616"/>
    </ligand>
</feature>
<feature type="binding site" evidence="1">
    <location>
        <position position="448"/>
    </location>
    <ligand>
        <name>L-aspartate</name>
        <dbReference type="ChEBI" id="CHEBI:29991"/>
    </ligand>
</feature>
<feature type="binding site" evidence="1">
    <location>
        <position position="482"/>
    </location>
    <ligand>
        <name>ATP</name>
        <dbReference type="ChEBI" id="CHEBI:30616"/>
    </ligand>
</feature>
<feature type="binding site" evidence="1">
    <location>
        <position position="489"/>
    </location>
    <ligand>
        <name>L-aspartate</name>
        <dbReference type="ChEBI" id="CHEBI:29991"/>
    </ligand>
</feature>
<feature type="binding site" evidence="1">
    <location>
        <begin position="534"/>
        <end position="537"/>
    </location>
    <ligand>
        <name>ATP</name>
        <dbReference type="ChEBI" id="CHEBI:30616"/>
    </ligand>
</feature>
<feature type="site" description="Important for tRNA non-discrimination" evidence="1">
    <location>
        <position position="31"/>
    </location>
</feature>
<feature type="site" description="Important for tRNA non-discrimination" evidence="1">
    <location>
        <position position="80"/>
    </location>
</feature>
<keyword id="KW-0030">Aminoacyl-tRNA synthetase</keyword>
<keyword id="KW-0067">ATP-binding</keyword>
<keyword id="KW-0963">Cytoplasm</keyword>
<keyword id="KW-0436">Ligase</keyword>
<keyword id="KW-0547">Nucleotide-binding</keyword>
<keyword id="KW-0648">Protein biosynthesis</keyword>
<organism>
    <name type="scientific">Mycobacterium sp. (strain JLS)</name>
    <dbReference type="NCBI Taxonomy" id="164757"/>
    <lineage>
        <taxon>Bacteria</taxon>
        <taxon>Bacillati</taxon>
        <taxon>Actinomycetota</taxon>
        <taxon>Actinomycetes</taxon>
        <taxon>Mycobacteriales</taxon>
        <taxon>Mycobacteriaceae</taxon>
        <taxon>Mycobacterium</taxon>
    </lineage>
</organism>
<name>SYDND_MYCSJ</name>
<sequence length="590" mass="64239">MLRSHAAGSLRPADAGQNVTLAGWVARRRDHGGVIFIDLRDASGVSQVVFREGAVLEAAHRLRAEFCVAVEGVVEVRPEGNENPEIPTGGIEVNATSLTVLGESAPLPFQLDDEAGEEARLKYRYLDLRREGPGKALRLRSKVNAAAREVLARHDFVEIETPTMTRSTPEGARDFLVPARLQPGSFYALPQSPQLFKQLLMVAGMERYYQIARCYRDEDFRADRQPEFTQLDMEMSFVDADDVIAVSEEILKALWALIGHDLPTPLPRITYAEAMRRFGTDKPDLRFGLELVECKEFFADTTFRVFQAPYVGAVVMPGGASQPRRTLDGWQEWAKQRGAKGLAYVLVGDDGTLGGPVAKNLTDAERDGLAAHVGANPGDCIFFAAGPPKSSRALLGAARIEIAKRLDMIDPDAWAFTWVVDWPLFEMAEDATAAGDVAVGSGAWTAVHHAFTAPQPQSEATFDTDPAGALADAYDIVCNGNEIGGGSIRIHRRDVQERVFAMMGIEHDEAQEKFGFLLDAFTFGAPPHGGIAFGWDRITALLARMDSIREVIAFPKSGGGADPLTGAPAPITPQQRRESGIDAKPKKDGE</sequence>
<evidence type="ECO:0000255" key="1">
    <source>
        <dbReference type="HAMAP-Rule" id="MF_00044"/>
    </source>
</evidence>
<evidence type="ECO:0000256" key="2">
    <source>
        <dbReference type="SAM" id="MobiDB-lite"/>
    </source>
</evidence>
<reference key="1">
    <citation type="submission" date="2007-02" db="EMBL/GenBank/DDBJ databases">
        <title>Complete sequence of Mycobacterium sp. JLS.</title>
        <authorList>
            <consortium name="US DOE Joint Genome Institute"/>
            <person name="Copeland A."/>
            <person name="Lucas S."/>
            <person name="Lapidus A."/>
            <person name="Barry K."/>
            <person name="Detter J.C."/>
            <person name="Glavina del Rio T."/>
            <person name="Hammon N."/>
            <person name="Israni S."/>
            <person name="Dalin E."/>
            <person name="Tice H."/>
            <person name="Pitluck S."/>
            <person name="Chain P."/>
            <person name="Malfatti S."/>
            <person name="Shin M."/>
            <person name="Vergez L."/>
            <person name="Schmutz J."/>
            <person name="Larimer F."/>
            <person name="Land M."/>
            <person name="Hauser L."/>
            <person name="Kyrpides N."/>
            <person name="Mikhailova N."/>
            <person name="Miller C.D."/>
            <person name="Anderson A.J."/>
            <person name="Sims R.C."/>
            <person name="Richardson P."/>
        </authorList>
    </citation>
    <scope>NUCLEOTIDE SEQUENCE [LARGE SCALE GENOMIC DNA]</scope>
    <source>
        <strain>JLS</strain>
    </source>
</reference>
<proteinExistence type="inferred from homology"/>
<comment type="function">
    <text evidence="1">Aspartyl-tRNA synthetase with relaxed tRNA specificity since it is able to aspartylate not only its cognate tRNA(Asp) but also tRNA(Asn). Reaction proceeds in two steps: L-aspartate is first activated by ATP to form Asp-AMP and then transferred to the acceptor end of tRNA(Asp/Asn).</text>
</comment>
<comment type="catalytic activity">
    <reaction evidence="1">
        <text>tRNA(Asx) + L-aspartate + ATP = L-aspartyl-tRNA(Asx) + AMP + diphosphate</text>
        <dbReference type="Rhea" id="RHEA:18349"/>
        <dbReference type="Rhea" id="RHEA-COMP:9710"/>
        <dbReference type="Rhea" id="RHEA-COMP:9711"/>
        <dbReference type="ChEBI" id="CHEBI:29991"/>
        <dbReference type="ChEBI" id="CHEBI:30616"/>
        <dbReference type="ChEBI" id="CHEBI:33019"/>
        <dbReference type="ChEBI" id="CHEBI:78442"/>
        <dbReference type="ChEBI" id="CHEBI:78516"/>
        <dbReference type="ChEBI" id="CHEBI:456215"/>
        <dbReference type="EC" id="6.1.1.23"/>
    </reaction>
</comment>
<comment type="subunit">
    <text evidence="1">Homodimer.</text>
</comment>
<comment type="subcellular location">
    <subcellularLocation>
        <location evidence="1">Cytoplasm</location>
    </subcellularLocation>
</comment>
<comment type="similarity">
    <text evidence="1">Belongs to the class-II aminoacyl-tRNA synthetase family. Type 1 subfamily.</text>
</comment>
<dbReference type="EC" id="6.1.1.23" evidence="1"/>
<dbReference type="EMBL" id="CP000580">
    <property type="protein sequence ID" value="ABN98132.1"/>
    <property type="molecule type" value="Genomic_DNA"/>
</dbReference>
<dbReference type="SMR" id="A3PZ05"/>
<dbReference type="KEGG" id="mjl:Mjls_2347"/>
<dbReference type="HOGENOM" id="CLU_014330_3_2_11"/>
<dbReference type="BioCyc" id="MSP164757:G1G8C-2366-MONOMER"/>
<dbReference type="GO" id="GO:0005737">
    <property type="term" value="C:cytoplasm"/>
    <property type="evidence" value="ECO:0007669"/>
    <property type="project" value="UniProtKB-SubCell"/>
</dbReference>
<dbReference type="GO" id="GO:0004815">
    <property type="term" value="F:aspartate-tRNA ligase activity"/>
    <property type="evidence" value="ECO:0007669"/>
    <property type="project" value="UniProtKB-UniRule"/>
</dbReference>
<dbReference type="GO" id="GO:0050560">
    <property type="term" value="F:aspartate-tRNA(Asn) ligase activity"/>
    <property type="evidence" value="ECO:0007669"/>
    <property type="project" value="UniProtKB-EC"/>
</dbReference>
<dbReference type="GO" id="GO:0005524">
    <property type="term" value="F:ATP binding"/>
    <property type="evidence" value="ECO:0007669"/>
    <property type="project" value="UniProtKB-UniRule"/>
</dbReference>
<dbReference type="GO" id="GO:0003676">
    <property type="term" value="F:nucleic acid binding"/>
    <property type="evidence" value="ECO:0007669"/>
    <property type="project" value="InterPro"/>
</dbReference>
<dbReference type="GO" id="GO:0006422">
    <property type="term" value="P:aspartyl-tRNA aminoacylation"/>
    <property type="evidence" value="ECO:0007669"/>
    <property type="project" value="UniProtKB-UniRule"/>
</dbReference>
<dbReference type="CDD" id="cd00777">
    <property type="entry name" value="AspRS_core"/>
    <property type="match status" value="1"/>
</dbReference>
<dbReference type="CDD" id="cd04317">
    <property type="entry name" value="EcAspRS_like_N"/>
    <property type="match status" value="1"/>
</dbReference>
<dbReference type="Gene3D" id="3.30.930.10">
    <property type="entry name" value="Bira Bifunctional Protein, Domain 2"/>
    <property type="match status" value="1"/>
</dbReference>
<dbReference type="Gene3D" id="3.30.1360.30">
    <property type="entry name" value="GAD-like domain"/>
    <property type="match status" value="1"/>
</dbReference>
<dbReference type="Gene3D" id="2.40.50.140">
    <property type="entry name" value="Nucleic acid-binding proteins"/>
    <property type="match status" value="1"/>
</dbReference>
<dbReference type="HAMAP" id="MF_00044">
    <property type="entry name" value="Asp_tRNA_synth_type1"/>
    <property type="match status" value="1"/>
</dbReference>
<dbReference type="InterPro" id="IPR004364">
    <property type="entry name" value="Aa-tRNA-synt_II"/>
</dbReference>
<dbReference type="InterPro" id="IPR006195">
    <property type="entry name" value="aa-tRNA-synth_II"/>
</dbReference>
<dbReference type="InterPro" id="IPR045864">
    <property type="entry name" value="aa-tRNA-synth_II/BPL/LPL"/>
</dbReference>
<dbReference type="InterPro" id="IPR004524">
    <property type="entry name" value="Asp-tRNA-ligase_1"/>
</dbReference>
<dbReference type="InterPro" id="IPR047089">
    <property type="entry name" value="Asp-tRNA-ligase_1_N"/>
</dbReference>
<dbReference type="InterPro" id="IPR002312">
    <property type="entry name" value="Asp/Asn-tRNA-synth_IIb"/>
</dbReference>
<dbReference type="InterPro" id="IPR047090">
    <property type="entry name" value="AspRS_core"/>
</dbReference>
<dbReference type="InterPro" id="IPR004115">
    <property type="entry name" value="GAD-like_sf"/>
</dbReference>
<dbReference type="InterPro" id="IPR029351">
    <property type="entry name" value="GAD_dom"/>
</dbReference>
<dbReference type="InterPro" id="IPR012340">
    <property type="entry name" value="NA-bd_OB-fold"/>
</dbReference>
<dbReference type="InterPro" id="IPR004365">
    <property type="entry name" value="NA-bd_OB_tRNA"/>
</dbReference>
<dbReference type="NCBIfam" id="TIGR00459">
    <property type="entry name" value="aspS_bact"/>
    <property type="match status" value="1"/>
</dbReference>
<dbReference type="NCBIfam" id="NF001750">
    <property type="entry name" value="PRK00476.1"/>
    <property type="match status" value="1"/>
</dbReference>
<dbReference type="PANTHER" id="PTHR22594:SF5">
    <property type="entry name" value="ASPARTATE--TRNA LIGASE, MITOCHONDRIAL"/>
    <property type="match status" value="1"/>
</dbReference>
<dbReference type="PANTHER" id="PTHR22594">
    <property type="entry name" value="ASPARTYL/LYSYL-TRNA SYNTHETASE"/>
    <property type="match status" value="1"/>
</dbReference>
<dbReference type="Pfam" id="PF02938">
    <property type="entry name" value="GAD"/>
    <property type="match status" value="1"/>
</dbReference>
<dbReference type="Pfam" id="PF00152">
    <property type="entry name" value="tRNA-synt_2"/>
    <property type="match status" value="1"/>
</dbReference>
<dbReference type="Pfam" id="PF01336">
    <property type="entry name" value="tRNA_anti-codon"/>
    <property type="match status" value="1"/>
</dbReference>
<dbReference type="PRINTS" id="PR01042">
    <property type="entry name" value="TRNASYNTHASP"/>
</dbReference>
<dbReference type="SUPFAM" id="SSF55681">
    <property type="entry name" value="Class II aaRS and biotin synthetases"/>
    <property type="match status" value="1"/>
</dbReference>
<dbReference type="SUPFAM" id="SSF55261">
    <property type="entry name" value="GAD domain-like"/>
    <property type="match status" value="1"/>
</dbReference>
<dbReference type="SUPFAM" id="SSF50249">
    <property type="entry name" value="Nucleic acid-binding proteins"/>
    <property type="match status" value="1"/>
</dbReference>
<dbReference type="PROSITE" id="PS50862">
    <property type="entry name" value="AA_TRNA_LIGASE_II"/>
    <property type="match status" value="1"/>
</dbReference>